<feature type="chain" id="PRO_1000050829" description="D-aminoacyl-tRNA deacylase">
    <location>
        <begin position="1"/>
        <end position="144"/>
    </location>
</feature>
<feature type="short sequence motif" description="Gly-cisPro motif, important for rejection of L-amino acids" evidence="1">
    <location>
        <begin position="136"/>
        <end position="137"/>
    </location>
</feature>
<keyword id="KW-0963">Cytoplasm</keyword>
<keyword id="KW-0378">Hydrolase</keyword>
<keyword id="KW-0694">RNA-binding</keyword>
<keyword id="KW-0820">tRNA-binding</keyword>
<name>DTD_CORGB</name>
<proteinExistence type="inferred from homology"/>
<organism>
    <name type="scientific">Corynebacterium glutamicum (strain R)</name>
    <dbReference type="NCBI Taxonomy" id="340322"/>
    <lineage>
        <taxon>Bacteria</taxon>
        <taxon>Bacillati</taxon>
        <taxon>Actinomycetota</taxon>
        <taxon>Actinomycetes</taxon>
        <taxon>Mycobacteriales</taxon>
        <taxon>Corynebacteriaceae</taxon>
        <taxon>Corynebacterium</taxon>
    </lineage>
</organism>
<dbReference type="EC" id="3.1.1.96" evidence="1"/>
<dbReference type="EMBL" id="AP009044">
    <property type="protein sequence ID" value="BAF54742.1"/>
    <property type="molecule type" value="Genomic_DNA"/>
</dbReference>
<dbReference type="RefSeq" id="WP_003859832.1">
    <property type="nucleotide sequence ID" value="NC_009342.1"/>
</dbReference>
<dbReference type="SMR" id="A4QES6"/>
<dbReference type="GeneID" id="1019875"/>
<dbReference type="KEGG" id="cgt:cgR_1748"/>
<dbReference type="HOGENOM" id="CLU_076901_1_2_11"/>
<dbReference type="PhylomeDB" id="A4QES6"/>
<dbReference type="Proteomes" id="UP000006698">
    <property type="component" value="Chromosome"/>
</dbReference>
<dbReference type="GO" id="GO:0005737">
    <property type="term" value="C:cytoplasm"/>
    <property type="evidence" value="ECO:0007669"/>
    <property type="project" value="UniProtKB-SubCell"/>
</dbReference>
<dbReference type="GO" id="GO:0051500">
    <property type="term" value="F:D-tyrosyl-tRNA(Tyr) deacylase activity"/>
    <property type="evidence" value="ECO:0007669"/>
    <property type="project" value="TreeGrafter"/>
</dbReference>
<dbReference type="GO" id="GO:0106026">
    <property type="term" value="F:Gly-tRNA(Ala) deacylase activity"/>
    <property type="evidence" value="ECO:0007669"/>
    <property type="project" value="UniProtKB-UniRule"/>
</dbReference>
<dbReference type="GO" id="GO:0043908">
    <property type="term" value="F:Ser(Gly)-tRNA(Ala) hydrolase activity"/>
    <property type="evidence" value="ECO:0007669"/>
    <property type="project" value="UniProtKB-UniRule"/>
</dbReference>
<dbReference type="GO" id="GO:0000049">
    <property type="term" value="F:tRNA binding"/>
    <property type="evidence" value="ECO:0007669"/>
    <property type="project" value="UniProtKB-UniRule"/>
</dbReference>
<dbReference type="GO" id="GO:0019478">
    <property type="term" value="P:D-amino acid catabolic process"/>
    <property type="evidence" value="ECO:0007669"/>
    <property type="project" value="UniProtKB-UniRule"/>
</dbReference>
<dbReference type="CDD" id="cd00563">
    <property type="entry name" value="Dtyr_deacylase"/>
    <property type="match status" value="1"/>
</dbReference>
<dbReference type="Gene3D" id="3.50.80.10">
    <property type="entry name" value="D-tyrosyl-tRNA(Tyr) deacylase"/>
    <property type="match status" value="1"/>
</dbReference>
<dbReference type="HAMAP" id="MF_00518">
    <property type="entry name" value="Deacylase_Dtd"/>
    <property type="match status" value="1"/>
</dbReference>
<dbReference type="InterPro" id="IPR003732">
    <property type="entry name" value="Daa-tRNA_deacyls_DTD"/>
</dbReference>
<dbReference type="InterPro" id="IPR023509">
    <property type="entry name" value="DTD-like_sf"/>
</dbReference>
<dbReference type="NCBIfam" id="TIGR00256">
    <property type="entry name" value="D-aminoacyl-tRNA deacylase"/>
    <property type="match status" value="1"/>
</dbReference>
<dbReference type="PANTHER" id="PTHR10472:SF5">
    <property type="entry name" value="D-AMINOACYL-TRNA DEACYLASE 1"/>
    <property type="match status" value="1"/>
</dbReference>
<dbReference type="PANTHER" id="PTHR10472">
    <property type="entry name" value="D-TYROSYL-TRNA TYR DEACYLASE"/>
    <property type="match status" value="1"/>
</dbReference>
<dbReference type="Pfam" id="PF02580">
    <property type="entry name" value="Tyr_Deacylase"/>
    <property type="match status" value="1"/>
</dbReference>
<dbReference type="SUPFAM" id="SSF69500">
    <property type="entry name" value="DTD-like"/>
    <property type="match status" value="1"/>
</dbReference>
<protein>
    <recommendedName>
        <fullName evidence="1">D-aminoacyl-tRNA deacylase</fullName>
        <shortName evidence="1">DTD</shortName>
        <ecNumber evidence="1">3.1.1.96</ecNumber>
    </recommendedName>
    <alternativeName>
        <fullName evidence="1">Gly-tRNA(Ala) deacylase</fullName>
    </alternativeName>
</protein>
<accession>A4QES6</accession>
<reference key="1">
    <citation type="journal article" date="2007" name="Microbiology">
        <title>Comparative analysis of the Corynebacterium glutamicum group and complete genome sequence of strain R.</title>
        <authorList>
            <person name="Yukawa H."/>
            <person name="Omumasaba C.A."/>
            <person name="Nonaka H."/>
            <person name="Kos P."/>
            <person name="Okai N."/>
            <person name="Suzuki N."/>
            <person name="Suda M."/>
            <person name="Tsuge Y."/>
            <person name="Watanabe J."/>
            <person name="Ikeda Y."/>
            <person name="Vertes A.A."/>
            <person name="Inui M."/>
        </authorList>
    </citation>
    <scope>NUCLEOTIDE SEQUENCE [LARGE SCALE GENOMIC DNA]</scope>
    <source>
        <strain>R</strain>
    </source>
</reference>
<gene>
    <name evidence="1" type="primary">dtd</name>
    <name type="ordered locus">cgR_1748</name>
</gene>
<evidence type="ECO:0000255" key="1">
    <source>
        <dbReference type="HAMAP-Rule" id="MF_00518"/>
    </source>
</evidence>
<comment type="function">
    <text evidence="1">An aminoacyl-tRNA editing enzyme that deacylates mischarged D-aminoacyl-tRNAs. Also deacylates mischarged glycyl-tRNA(Ala), protecting cells against glycine mischarging by AlaRS. Acts via tRNA-based rather than protein-based catalysis; rejects L-amino acids rather than detecting D-amino acids in the active site. By recycling D-aminoacyl-tRNA to D-amino acids and free tRNA molecules, this enzyme counteracts the toxicity associated with the formation of D-aminoacyl-tRNA entities in vivo and helps enforce protein L-homochirality.</text>
</comment>
<comment type="catalytic activity">
    <reaction evidence="1">
        <text>glycyl-tRNA(Ala) + H2O = tRNA(Ala) + glycine + H(+)</text>
        <dbReference type="Rhea" id="RHEA:53744"/>
        <dbReference type="Rhea" id="RHEA-COMP:9657"/>
        <dbReference type="Rhea" id="RHEA-COMP:13640"/>
        <dbReference type="ChEBI" id="CHEBI:15377"/>
        <dbReference type="ChEBI" id="CHEBI:15378"/>
        <dbReference type="ChEBI" id="CHEBI:57305"/>
        <dbReference type="ChEBI" id="CHEBI:78442"/>
        <dbReference type="ChEBI" id="CHEBI:78522"/>
        <dbReference type="EC" id="3.1.1.96"/>
    </reaction>
</comment>
<comment type="catalytic activity">
    <reaction evidence="1">
        <text>a D-aminoacyl-tRNA + H2O = a tRNA + a D-alpha-amino acid + H(+)</text>
        <dbReference type="Rhea" id="RHEA:13953"/>
        <dbReference type="Rhea" id="RHEA-COMP:10123"/>
        <dbReference type="Rhea" id="RHEA-COMP:10124"/>
        <dbReference type="ChEBI" id="CHEBI:15377"/>
        <dbReference type="ChEBI" id="CHEBI:15378"/>
        <dbReference type="ChEBI" id="CHEBI:59871"/>
        <dbReference type="ChEBI" id="CHEBI:78442"/>
        <dbReference type="ChEBI" id="CHEBI:79333"/>
        <dbReference type="EC" id="3.1.1.96"/>
    </reaction>
</comment>
<comment type="subunit">
    <text evidence="1">Homodimer.</text>
</comment>
<comment type="subcellular location">
    <subcellularLocation>
        <location evidence="1">Cytoplasm</location>
    </subcellularLocation>
</comment>
<comment type="domain">
    <text evidence="1">A Gly-cisPro motif from one monomer fits into the active site of the other monomer to allow specific chiral rejection of L-amino acids.</text>
</comment>
<comment type="similarity">
    <text evidence="1">Belongs to the DTD family.</text>
</comment>
<sequence>MKAVLTRVSSASVSVDDEIVGAIDCPDTGGILALVGVGAADSDDAWETMVRKIAELRILDGEQSVSDVNAPVLLVSQFTLHGRTAKGRRPSWSDAAPGEVAEPVIEKIAQGLRERGITVEQGRFGAMMKVTSVNEGPFTVLVEC</sequence>